<feature type="chain" id="PRO_0000150094" description="DNA repair and recombination protein RadA">
    <location>
        <begin position="1"/>
        <end position="325"/>
    </location>
</feature>
<feature type="binding site" evidence="1">
    <location>
        <begin position="107"/>
        <end position="114"/>
    </location>
    <ligand>
        <name>ATP</name>
        <dbReference type="ChEBI" id="CHEBI:30616"/>
    </ligand>
</feature>
<comment type="function">
    <text evidence="1">Involved in DNA repair and in homologous recombination. Binds and assemble on single-stranded DNA to form a nucleoprotein filament. Hydrolyzes ATP in a ssDNA-dependent manner and promotes DNA strand exchange between homologous DNA molecules.</text>
</comment>
<comment type="similarity">
    <text evidence="1">Belongs to the eukaryotic RecA-like protein family.</text>
</comment>
<protein>
    <recommendedName>
        <fullName evidence="1">DNA repair and recombination protein RadA</fullName>
    </recommendedName>
</protein>
<name>RADA_METAC</name>
<proteinExistence type="inferred from homology"/>
<gene>
    <name evidence="1" type="primary">radA</name>
    <name type="ordered locus">MA_3545</name>
</gene>
<sequence>MSEVALEELPGVGPATAEKLKEAGFNTVEAVAVASPSELATTAEIGESTAAKIINSARQAADIGGFETGDLVLERRKLVGKLTTGCVEFDEMMGGGIETQSITELYGEFGSGKTQVAHQLAVNVQMDKEHGGLDGSVIIIDTENTFRPERITQMVKGLSEKYGMELDPEEFLQNIHVARAYNSNHQILLVDSATDLANELKEMGKPVRLLIVDSLMAHFRAEYVGRGTLADRQQKLNKHMHGLLRFGDLFNACVVVTNQVMAKPDAFFGDPTRPVGGHIVGHTATFRLYLRKSKGEKRIIRLVDSPSLPEGEAVVAVTTAGLTDQ</sequence>
<evidence type="ECO:0000255" key="1">
    <source>
        <dbReference type="HAMAP-Rule" id="MF_00348"/>
    </source>
</evidence>
<dbReference type="EMBL" id="AE010299">
    <property type="protein sequence ID" value="AAM06907.1"/>
    <property type="molecule type" value="Genomic_DNA"/>
</dbReference>
<dbReference type="RefSeq" id="WP_011023460.1">
    <property type="nucleotide sequence ID" value="NC_003552.1"/>
</dbReference>
<dbReference type="SMR" id="Q8TK71"/>
<dbReference type="FunCoup" id="Q8TK71">
    <property type="interactions" value="111"/>
</dbReference>
<dbReference type="STRING" id="188937.MA_3545"/>
<dbReference type="EnsemblBacteria" id="AAM06907">
    <property type="protein sequence ID" value="AAM06907"/>
    <property type="gene ID" value="MA_3545"/>
</dbReference>
<dbReference type="GeneID" id="1475438"/>
<dbReference type="KEGG" id="mac:MA_3545"/>
<dbReference type="HOGENOM" id="CLU_041732_0_0_2"/>
<dbReference type="InParanoid" id="Q8TK71"/>
<dbReference type="OrthoDB" id="31129at2157"/>
<dbReference type="PhylomeDB" id="Q8TK71"/>
<dbReference type="Proteomes" id="UP000002487">
    <property type="component" value="Chromosome"/>
</dbReference>
<dbReference type="GO" id="GO:0005524">
    <property type="term" value="F:ATP binding"/>
    <property type="evidence" value="ECO:0007669"/>
    <property type="project" value="UniProtKB-UniRule"/>
</dbReference>
<dbReference type="GO" id="GO:0016887">
    <property type="term" value="F:ATP hydrolysis activity"/>
    <property type="evidence" value="ECO:0007669"/>
    <property type="project" value="InterPro"/>
</dbReference>
<dbReference type="GO" id="GO:0140664">
    <property type="term" value="F:ATP-dependent DNA damage sensor activity"/>
    <property type="evidence" value="ECO:0007669"/>
    <property type="project" value="InterPro"/>
</dbReference>
<dbReference type="GO" id="GO:0003684">
    <property type="term" value="F:damaged DNA binding"/>
    <property type="evidence" value="ECO:0007669"/>
    <property type="project" value="UniProtKB-UniRule"/>
</dbReference>
<dbReference type="GO" id="GO:0006310">
    <property type="term" value="P:DNA recombination"/>
    <property type="evidence" value="ECO:0007669"/>
    <property type="project" value="UniProtKB-UniRule"/>
</dbReference>
<dbReference type="GO" id="GO:0006281">
    <property type="term" value="P:DNA repair"/>
    <property type="evidence" value="ECO:0007669"/>
    <property type="project" value="UniProtKB-UniRule"/>
</dbReference>
<dbReference type="CDD" id="cd19515">
    <property type="entry name" value="archRadA"/>
    <property type="match status" value="1"/>
</dbReference>
<dbReference type="FunFam" id="3.40.50.300:FF:002052">
    <property type="entry name" value="DNA repair protein RAD51 homolog"/>
    <property type="match status" value="1"/>
</dbReference>
<dbReference type="Gene3D" id="1.10.150.20">
    <property type="entry name" value="5' to 3' exonuclease, C-terminal subdomain"/>
    <property type="match status" value="1"/>
</dbReference>
<dbReference type="Gene3D" id="3.40.50.300">
    <property type="entry name" value="P-loop containing nucleotide triphosphate hydrolases"/>
    <property type="match status" value="1"/>
</dbReference>
<dbReference type="HAMAP" id="MF_00348">
    <property type="entry name" value="RadA_arch"/>
    <property type="match status" value="1"/>
</dbReference>
<dbReference type="InterPro" id="IPR003593">
    <property type="entry name" value="AAA+_ATPase"/>
</dbReference>
<dbReference type="InterPro" id="IPR013632">
    <property type="entry name" value="DNA_recomb/repair_Rad51_C"/>
</dbReference>
<dbReference type="InterPro" id="IPR011938">
    <property type="entry name" value="DNA_recomb/repair_RadA"/>
</dbReference>
<dbReference type="InterPro" id="IPR016467">
    <property type="entry name" value="DNA_recomb/repair_RecA-like"/>
</dbReference>
<dbReference type="InterPro" id="IPR010995">
    <property type="entry name" value="DNA_repair_Rad51/TF_NusA_a-hlx"/>
</dbReference>
<dbReference type="InterPro" id="IPR003583">
    <property type="entry name" value="Hlx-hairpin-Hlx_DNA-bd_motif"/>
</dbReference>
<dbReference type="InterPro" id="IPR027417">
    <property type="entry name" value="P-loop_NTPase"/>
</dbReference>
<dbReference type="InterPro" id="IPR020588">
    <property type="entry name" value="RecA_ATP-bd"/>
</dbReference>
<dbReference type="InterPro" id="IPR020587">
    <property type="entry name" value="RecA_monomer-monomer_interface"/>
</dbReference>
<dbReference type="NCBIfam" id="NF003301">
    <property type="entry name" value="PRK04301.1"/>
    <property type="match status" value="1"/>
</dbReference>
<dbReference type="NCBIfam" id="TIGR02236">
    <property type="entry name" value="recomb_radA"/>
    <property type="match status" value="1"/>
</dbReference>
<dbReference type="PANTHER" id="PTHR22942:SF30">
    <property type="entry name" value="MEIOTIC RECOMBINATION PROTEIN DMC1_LIM15 HOMOLOG"/>
    <property type="match status" value="1"/>
</dbReference>
<dbReference type="PANTHER" id="PTHR22942">
    <property type="entry name" value="RECA/RAD51/RADA DNA STRAND-PAIRING FAMILY MEMBER"/>
    <property type="match status" value="1"/>
</dbReference>
<dbReference type="Pfam" id="PF14520">
    <property type="entry name" value="HHH_5"/>
    <property type="match status" value="1"/>
</dbReference>
<dbReference type="Pfam" id="PF08423">
    <property type="entry name" value="Rad51"/>
    <property type="match status" value="1"/>
</dbReference>
<dbReference type="PIRSF" id="PIRSF005856">
    <property type="entry name" value="Rad51"/>
    <property type="match status" value="1"/>
</dbReference>
<dbReference type="SMART" id="SM00382">
    <property type="entry name" value="AAA"/>
    <property type="match status" value="1"/>
</dbReference>
<dbReference type="SMART" id="SM00278">
    <property type="entry name" value="HhH1"/>
    <property type="match status" value="2"/>
</dbReference>
<dbReference type="SUPFAM" id="SSF52540">
    <property type="entry name" value="P-loop containing nucleoside triphosphate hydrolases"/>
    <property type="match status" value="1"/>
</dbReference>
<dbReference type="SUPFAM" id="SSF47794">
    <property type="entry name" value="Rad51 N-terminal domain-like"/>
    <property type="match status" value="1"/>
</dbReference>
<dbReference type="PROSITE" id="PS50162">
    <property type="entry name" value="RECA_2"/>
    <property type="match status" value="1"/>
</dbReference>
<dbReference type="PROSITE" id="PS50163">
    <property type="entry name" value="RECA_3"/>
    <property type="match status" value="1"/>
</dbReference>
<keyword id="KW-0067">ATP-binding</keyword>
<keyword id="KW-0227">DNA damage</keyword>
<keyword id="KW-0233">DNA recombination</keyword>
<keyword id="KW-0238">DNA-binding</keyword>
<keyword id="KW-0547">Nucleotide-binding</keyword>
<keyword id="KW-1185">Reference proteome</keyword>
<accession>Q8TK71</accession>
<reference key="1">
    <citation type="journal article" date="2002" name="Genome Res.">
        <title>The genome of Methanosarcina acetivorans reveals extensive metabolic and physiological diversity.</title>
        <authorList>
            <person name="Galagan J.E."/>
            <person name="Nusbaum C."/>
            <person name="Roy A."/>
            <person name="Endrizzi M.G."/>
            <person name="Macdonald P."/>
            <person name="FitzHugh W."/>
            <person name="Calvo S."/>
            <person name="Engels R."/>
            <person name="Smirnov S."/>
            <person name="Atnoor D."/>
            <person name="Brown A."/>
            <person name="Allen N."/>
            <person name="Naylor J."/>
            <person name="Stange-Thomann N."/>
            <person name="DeArellano K."/>
            <person name="Johnson R."/>
            <person name="Linton L."/>
            <person name="McEwan P."/>
            <person name="McKernan K."/>
            <person name="Talamas J."/>
            <person name="Tirrell A."/>
            <person name="Ye W."/>
            <person name="Zimmer A."/>
            <person name="Barber R.D."/>
            <person name="Cann I."/>
            <person name="Graham D.E."/>
            <person name="Grahame D.A."/>
            <person name="Guss A.M."/>
            <person name="Hedderich R."/>
            <person name="Ingram-Smith C."/>
            <person name="Kuettner H.C."/>
            <person name="Krzycki J.A."/>
            <person name="Leigh J.A."/>
            <person name="Li W."/>
            <person name="Liu J."/>
            <person name="Mukhopadhyay B."/>
            <person name="Reeve J.N."/>
            <person name="Smith K."/>
            <person name="Springer T.A."/>
            <person name="Umayam L.A."/>
            <person name="White O."/>
            <person name="White R.H."/>
            <person name="de Macario E.C."/>
            <person name="Ferry J.G."/>
            <person name="Jarrell K.F."/>
            <person name="Jing H."/>
            <person name="Macario A.J.L."/>
            <person name="Paulsen I.T."/>
            <person name="Pritchett M."/>
            <person name="Sowers K.R."/>
            <person name="Swanson R.V."/>
            <person name="Zinder S.H."/>
            <person name="Lander E."/>
            <person name="Metcalf W.W."/>
            <person name="Birren B."/>
        </authorList>
    </citation>
    <scope>NUCLEOTIDE SEQUENCE [LARGE SCALE GENOMIC DNA]</scope>
    <source>
        <strain>ATCC 35395 / DSM 2834 / JCM 12185 / C2A</strain>
    </source>
</reference>
<organism>
    <name type="scientific">Methanosarcina acetivorans (strain ATCC 35395 / DSM 2834 / JCM 12185 / C2A)</name>
    <dbReference type="NCBI Taxonomy" id="188937"/>
    <lineage>
        <taxon>Archaea</taxon>
        <taxon>Methanobacteriati</taxon>
        <taxon>Methanobacteriota</taxon>
        <taxon>Stenosarchaea group</taxon>
        <taxon>Methanomicrobia</taxon>
        <taxon>Methanosarcinales</taxon>
        <taxon>Methanosarcinaceae</taxon>
        <taxon>Methanosarcina</taxon>
    </lineage>
</organism>